<protein>
    <recommendedName>
        <fullName evidence="1">UDP-2,3-diacylglucosamine hydrolase</fullName>
        <ecNumber evidence="1">3.6.1.54</ecNumber>
    </recommendedName>
    <alternativeName>
        <fullName evidence="1">UDP-2,3-diacylglucosamine diphosphatase</fullName>
    </alternativeName>
</protein>
<name>LPXH_BORPA</name>
<comment type="function">
    <text evidence="1">Hydrolyzes the pyrophosphate bond of UDP-2,3-diacylglucosamine to yield 2,3-diacylglucosamine 1-phosphate (lipid X) and UMP by catalyzing the attack of water at the alpha-P atom. Involved in the biosynthesis of lipid A, a phosphorylated glycolipid that anchors the lipopolysaccharide to the outer membrane of the cell.</text>
</comment>
<comment type="catalytic activity">
    <reaction evidence="1">
        <text>UDP-2-N,3-O-bis[(3R)-3-hydroxytetradecanoyl]-alpha-D-glucosamine + H2O = 2-N,3-O-bis[(3R)-3-hydroxytetradecanoyl]-alpha-D-glucosaminyl 1-phosphate + UMP + 2 H(+)</text>
        <dbReference type="Rhea" id="RHEA:25213"/>
        <dbReference type="ChEBI" id="CHEBI:15377"/>
        <dbReference type="ChEBI" id="CHEBI:15378"/>
        <dbReference type="ChEBI" id="CHEBI:57865"/>
        <dbReference type="ChEBI" id="CHEBI:57957"/>
        <dbReference type="ChEBI" id="CHEBI:78847"/>
        <dbReference type="EC" id="3.6.1.54"/>
    </reaction>
</comment>
<comment type="cofactor">
    <cofactor evidence="1">
        <name>Mn(2+)</name>
        <dbReference type="ChEBI" id="CHEBI:29035"/>
    </cofactor>
    <text evidence="1">Binds 2 Mn(2+) ions per subunit in a binuclear metal center.</text>
</comment>
<comment type="pathway">
    <text evidence="1">Glycolipid biosynthesis; lipid IV(A) biosynthesis; lipid IV(A) from (3R)-3-hydroxytetradecanoyl-[acyl-carrier-protein] and UDP-N-acetyl-alpha-D-glucosamine: step 4/6.</text>
</comment>
<comment type="subcellular location">
    <subcellularLocation>
        <location evidence="1">Cell inner membrane</location>
        <topology evidence="1">Peripheral membrane protein</topology>
        <orientation evidence="1">Cytoplasmic side</orientation>
    </subcellularLocation>
</comment>
<comment type="similarity">
    <text evidence="1">Belongs to the LpxH family.</text>
</comment>
<sequence length="258" mass="28292">MNKLALQGPLWLASDLHLGPATPATAEAFLGLLQAAADEASALLLPGDIFDAWIGDDVIRAAPPWLAAVLQGIRAAAGRIPVYLGRGNRDFLIGQELADALGAHLLPEPVLLETDYGRILLTHGDEYCTDDSAYQQFRAMVRNPQWQAQFLAMSIPERLAMAEQARGESQAANQAKSMEIMDVNPASVEAALREADVDVLVHGHTHRPARHVLSVDGRKRERWVLPDWDCDHADPPRGGWLVIDRDGLQCFDLVEDED</sequence>
<evidence type="ECO:0000255" key="1">
    <source>
        <dbReference type="HAMAP-Rule" id="MF_00575"/>
    </source>
</evidence>
<accession>Q7W865</accession>
<gene>
    <name evidence="1" type="primary">lpxH</name>
    <name type="ordered locus">BPP2280</name>
</gene>
<reference key="1">
    <citation type="journal article" date="2003" name="Nat. Genet.">
        <title>Comparative analysis of the genome sequences of Bordetella pertussis, Bordetella parapertussis and Bordetella bronchiseptica.</title>
        <authorList>
            <person name="Parkhill J."/>
            <person name="Sebaihia M."/>
            <person name="Preston A."/>
            <person name="Murphy L.D."/>
            <person name="Thomson N.R."/>
            <person name="Harris D.E."/>
            <person name="Holden M.T.G."/>
            <person name="Churcher C.M."/>
            <person name="Bentley S.D."/>
            <person name="Mungall K.L."/>
            <person name="Cerdeno-Tarraga A.-M."/>
            <person name="Temple L."/>
            <person name="James K.D."/>
            <person name="Harris B."/>
            <person name="Quail M.A."/>
            <person name="Achtman M."/>
            <person name="Atkin R."/>
            <person name="Baker S."/>
            <person name="Basham D."/>
            <person name="Bason N."/>
            <person name="Cherevach I."/>
            <person name="Chillingworth T."/>
            <person name="Collins M."/>
            <person name="Cronin A."/>
            <person name="Davis P."/>
            <person name="Doggett J."/>
            <person name="Feltwell T."/>
            <person name="Goble A."/>
            <person name="Hamlin N."/>
            <person name="Hauser H."/>
            <person name="Holroyd S."/>
            <person name="Jagels K."/>
            <person name="Leather S."/>
            <person name="Moule S."/>
            <person name="Norberczak H."/>
            <person name="O'Neil S."/>
            <person name="Ormond D."/>
            <person name="Price C."/>
            <person name="Rabbinowitsch E."/>
            <person name="Rutter S."/>
            <person name="Sanders M."/>
            <person name="Saunders D."/>
            <person name="Seeger K."/>
            <person name="Sharp S."/>
            <person name="Simmonds M."/>
            <person name="Skelton J."/>
            <person name="Squares R."/>
            <person name="Squares S."/>
            <person name="Stevens K."/>
            <person name="Unwin L."/>
            <person name="Whitehead S."/>
            <person name="Barrell B.G."/>
            <person name="Maskell D.J."/>
        </authorList>
    </citation>
    <scope>NUCLEOTIDE SEQUENCE [LARGE SCALE GENOMIC DNA]</scope>
    <source>
        <strain>12822 / ATCC BAA-587 / NCTC 13253</strain>
    </source>
</reference>
<proteinExistence type="inferred from homology"/>
<dbReference type="EC" id="3.6.1.54" evidence="1"/>
<dbReference type="EMBL" id="BX640429">
    <property type="protein sequence ID" value="CAE37578.1"/>
    <property type="molecule type" value="Genomic_DNA"/>
</dbReference>
<dbReference type="RefSeq" id="WP_010926282.1">
    <property type="nucleotide sequence ID" value="NC_002928.3"/>
</dbReference>
<dbReference type="SMR" id="Q7W865"/>
<dbReference type="DNASU" id="1666040"/>
<dbReference type="GeneID" id="93204057"/>
<dbReference type="KEGG" id="bpa:BPP2280"/>
<dbReference type="HOGENOM" id="CLU_074586_0_0_4"/>
<dbReference type="UniPathway" id="UPA00359">
    <property type="reaction ID" value="UER00480"/>
</dbReference>
<dbReference type="Proteomes" id="UP000001421">
    <property type="component" value="Chromosome"/>
</dbReference>
<dbReference type="GO" id="GO:0005737">
    <property type="term" value="C:cytoplasm"/>
    <property type="evidence" value="ECO:0007669"/>
    <property type="project" value="InterPro"/>
</dbReference>
<dbReference type="GO" id="GO:0019897">
    <property type="term" value="C:extrinsic component of plasma membrane"/>
    <property type="evidence" value="ECO:0007669"/>
    <property type="project" value="UniProtKB-UniRule"/>
</dbReference>
<dbReference type="GO" id="GO:0030145">
    <property type="term" value="F:manganese ion binding"/>
    <property type="evidence" value="ECO:0007669"/>
    <property type="project" value="UniProtKB-UniRule"/>
</dbReference>
<dbReference type="GO" id="GO:0008758">
    <property type="term" value="F:UDP-2,3-diacylglucosamine hydrolase activity"/>
    <property type="evidence" value="ECO:0007669"/>
    <property type="project" value="UniProtKB-UniRule"/>
</dbReference>
<dbReference type="GO" id="GO:0009245">
    <property type="term" value="P:lipid A biosynthetic process"/>
    <property type="evidence" value="ECO:0007669"/>
    <property type="project" value="UniProtKB-UniRule"/>
</dbReference>
<dbReference type="CDD" id="cd07398">
    <property type="entry name" value="MPP_YbbF-LpxH"/>
    <property type="match status" value="1"/>
</dbReference>
<dbReference type="Gene3D" id="3.60.21.10">
    <property type="match status" value="1"/>
</dbReference>
<dbReference type="HAMAP" id="MF_00575">
    <property type="entry name" value="LpxH"/>
    <property type="match status" value="1"/>
</dbReference>
<dbReference type="InterPro" id="IPR004843">
    <property type="entry name" value="Calcineurin-like_PHP_ApaH"/>
</dbReference>
<dbReference type="InterPro" id="IPR043461">
    <property type="entry name" value="LpxH-like"/>
</dbReference>
<dbReference type="InterPro" id="IPR029052">
    <property type="entry name" value="Metallo-depent_PP-like"/>
</dbReference>
<dbReference type="InterPro" id="IPR010138">
    <property type="entry name" value="UDP-diacylglucosamine_Hdrlase"/>
</dbReference>
<dbReference type="NCBIfam" id="TIGR01854">
    <property type="entry name" value="lipid_A_lpxH"/>
    <property type="match status" value="1"/>
</dbReference>
<dbReference type="NCBIfam" id="NF003743">
    <property type="entry name" value="PRK05340.1"/>
    <property type="match status" value="1"/>
</dbReference>
<dbReference type="PANTHER" id="PTHR34990:SF1">
    <property type="entry name" value="UDP-2,3-DIACYLGLUCOSAMINE HYDROLASE"/>
    <property type="match status" value="1"/>
</dbReference>
<dbReference type="PANTHER" id="PTHR34990">
    <property type="entry name" value="UDP-2,3-DIACYLGLUCOSAMINE HYDROLASE-RELATED"/>
    <property type="match status" value="1"/>
</dbReference>
<dbReference type="Pfam" id="PF00149">
    <property type="entry name" value="Metallophos"/>
    <property type="match status" value="1"/>
</dbReference>
<dbReference type="SUPFAM" id="SSF56300">
    <property type="entry name" value="Metallo-dependent phosphatases"/>
    <property type="match status" value="1"/>
</dbReference>
<keyword id="KW-0997">Cell inner membrane</keyword>
<keyword id="KW-1003">Cell membrane</keyword>
<keyword id="KW-0378">Hydrolase</keyword>
<keyword id="KW-0441">Lipid A biosynthesis</keyword>
<keyword id="KW-0444">Lipid biosynthesis</keyword>
<keyword id="KW-0443">Lipid metabolism</keyword>
<keyword id="KW-0464">Manganese</keyword>
<keyword id="KW-0472">Membrane</keyword>
<keyword id="KW-0479">Metal-binding</keyword>
<feature type="chain" id="PRO_0000214103" description="UDP-2,3-diacylglucosamine hydrolase">
    <location>
        <begin position="1"/>
        <end position="258"/>
    </location>
</feature>
<feature type="binding site" evidence="1">
    <location>
        <position position="15"/>
    </location>
    <ligand>
        <name>Mn(2+)</name>
        <dbReference type="ChEBI" id="CHEBI:29035"/>
        <label>1</label>
    </ligand>
</feature>
<feature type="binding site" evidence="1">
    <location>
        <position position="17"/>
    </location>
    <ligand>
        <name>Mn(2+)</name>
        <dbReference type="ChEBI" id="CHEBI:29035"/>
        <label>1</label>
    </ligand>
</feature>
<feature type="binding site" evidence="1">
    <location>
        <position position="48"/>
    </location>
    <ligand>
        <name>Mn(2+)</name>
        <dbReference type="ChEBI" id="CHEBI:29035"/>
        <label>1</label>
    </ligand>
</feature>
<feature type="binding site" evidence="1">
    <location>
        <position position="48"/>
    </location>
    <ligand>
        <name>Mn(2+)</name>
        <dbReference type="ChEBI" id="CHEBI:29035"/>
        <label>2</label>
    </ligand>
</feature>
<feature type="binding site" evidence="1">
    <location>
        <begin position="88"/>
        <end position="89"/>
    </location>
    <ligand>
        <name>substrate</name>
    </ligand>
</feature>
<feature type="binding site" evidence="1">
    <location>
        <position position="88"/>
    </location>
    <ligand>
        <name>Mn(2+)</name>
        <dbReference type="ChEBI" id="CHEBI:29035"/>
        <label>2</label>
    </ligand>
</feature>
<feature type="binding site" evidence="1">
    <location>
        <position position="123"/>
    </location>
    <ligand>
        <name>Mn(2+)</name>
        <dbReference type="ChEBI" id="CHEBI:29035"/>
        <label>2</label>
    </ligand>
</feature>
<feature type="binding site" evidence="1">
    <location>
        <position position="131"/>
    </location>
    <ligand>
        <name>substrate</name>
    </ligand>
</feature>
<feature type="binding site" evidence="1">
    <location>
        <position position="169"/>
    </location>
    <ligand>
        <name>substrate</name>
    </ligand>
</feature>
<feature type="binding site" evidence="1">
    <location>
        <position position="173"/>
    </location>
    <ligand>
        <name>substrate</name>
    </ligand>
</feature>
<feature type="binding site" evidence="1">
    <location>
        <position position="176"/>
    </location>
    <ligand>
        <name>substrate</name>
    </ligand>
</feature>
<feature type="binding site" evidence="1">
    <location>
        <position position="204"/>
    </location>
    <ligand>
        <name>Mn(2+)</name>
        <dbReference type="ChEBI" id="CHEBI:29035"/>
        <label>2</label>
    </ligand>
</feature>
<feature type="binding site" evidence="1">
    <location>
        <position position="204"/>
    </location>
    <ligand>
        <name>substrate</name>
    </ligand>
</feature>
<feature type="binding site" evidence="1">
    <location>
        <position position="206"/>
    </location>
    <ligand>
        <name>Mn(2+)</name>
        <dbReference type="ChEBI" id="CHEBI:29035"/>
        <label>1</label>
    </ligand>
</feature>
<organism>
    <name type="scientific">Bordetella parapertussis (strain 12822 / ATCC BAA-587 / NCTC 13253)</name>
    <dbReference type="NCBI Taxonomy" id="257311"/>
    <lineage>
        <taxon>Bacteria</taxon>
        <taxon>Pseudomonadati</taxon>
        <taxon>Pseudomonadota</taxon>
        <taxon>Betaproteobacteria</taxon>
        <taxon>Burkholderiales</taxon>
        <taxon>Alcaligenaceae</taxon>
        <taxon>Bordetella</taxon>
    </lineage>
</organism>